<reference key="1">
    <citation type="journal article" date="2006" name="PLoS Genet.">
        <title>Secrets of soil survival revealed by the genome sequence of Arthrobacter aurescens TC1.</title>
        <authorList>
            <person name="Mongodin E.F."/>
            <person name="Shapir N."/>
            <person name="Daugherty S.C."/>
            <person name="DeBoy R.T."/>
            <person name="Emerson J.B."/>
            <person name="Shvartzbeyn A."/>
            <person name="Radune D."/>
            <person name="Vamathevan J."/>
            <person name="Riggs F."/>
            <person name="Grinberg V."/>
            <person name="Khouri H.M."/>
            <person name="Wackett L.P."/>
            <person name="Nelson K.E."/>
            <person name="Sadowsky M.J."/>
        </authorList>
    </citation>
    <scope>NUCLEOTIDE SEQUENCE [LARGE SCALE GENOMIC DNA]</scope>
    <source>
        <strain>TC1</strain>
    </source>
</reference>
<proteinExistence type="inferred from homology"/>
<accession>A1R8A6</accession>
<feature type="chain" id="PRO_0000335009" description="Glutamyl-tRNA reductase">
    <location>
        <begin position="1"/>
        <end position="440"/>
    </location>
</feature>
<feature type="active site" description="Nucleophile" evidence="1">
    <location>
        <position position="48"/>
    </location>
</feature>
<feature type="binding site" evidence="1">
    <location>
        <begin position="47"/>
        <end position="50"/>
    </location>
    <ligand>
        <name>substrate</name>
    </ligand>
</feature>
<feature type="binding site" evidence="1">
    <location>
        <position position="110"/>
    </location>
    <ligand>
        <name>substrate</name>
    </ligand>
</feature>
<feature type="binding site" evidence="1">
    <location>
        <begin position="115"/>
        <end position="117"/>
    </location>
    <ligand>
        <name>substrate</name>
    </ligand>
</feature>
<feature type="binding site" evidence="1">
    <location>
        <position position="121"/>
    </location>
    <ligand>
        <name>substrate</name>
    </ligand>
</feature>
<feature type="binding site" evidence="1">
    <location>
        <begin position="192"/>
        <end position="197"/>
    </location>
    <ligand>
        <name>NADP(+)</name>
        <dbReference type="ChEBI" id="CHEBI:58349"/>
    </ligand>
</feature>
<feature type="site" description="Important for activity" evidence="1">
    <location>
        <position position="100"/>
    </location>
</feature>
<comment type="function">
    <text evidence="1">Catalyzes the NADPH-dependent reduction of glutamyl-tRNA(Glu) to glutamate 1-semialdehyde (GSA).</text>
</comment>
<comment type="catalytic activity">
    <reaction evidence="1">
        <text>(S)-4-amino-5-oxopentanoate + tRNA(Glu) + NADP(+) = L-glutamyl-tRNA(Glu) + NADPH + H(+)</text>
        <dbReference type="Rhea" id="RHEA:12344"/>
        <dbReference type="Rhea" id="RHEA-COMP:9663"/>
        <dbReference type="Rhea" id="RHEA-COMP:9680"/>
        <dbReference type="ChEBI" id="CHEBI:15378"/>
        <dbReference type="ChEBI" id="CHEBI:57501"/>
        <dbReference type="ChEBI" id="CHEBI:57783"/>
        <dbReference type="ChEBI" id="CHEBI:58349"/>
        <dbReference type="ChEBI" id="CHEBI:78442"/>
        <dbReference type="ChEBI" id="CHEBI:78520"/>
        <dbReference type="EC" id="1.2.1.70"/>
    </reaction>
</comment>
<comment type="pathway">
    <text evidence="1">Porphyrin-containing compound metabolism; protoporphyrin-IX biosynthesis; 5-aminolevulinate from L-glutamyl-tRNA(Glu): step 1/2.</text>
</comment>
<comment type="subunit">
    <text evidence="1">Homodimer.</text>
</comment>
<comment type="domain">
    <text evidence="1">Possesses an unusual extended V-shaped dimeric structure with each monomer consisting of three distinct domains arranged along a curved 'spinal' alpha-helix. The N-terminal catalytic domain specifically recognizes the glutamate moiety of the substrate. The second domain is the NADPH-binding domain, and the third C-terminal domain is responsible for dimerization.</text>
</comment>
<comment type="miscellaneous">
    <text evidence="1">During catalysis, the active site Cys acts as a nucleophile attacking the alpha-carbonyl group of tRNA-bound glutamate with the formation of a thioester intermediate between enzyme and glutamate, and the concomitant release of tRNA(Glu). The thioester intermediate is finally reduced by direct hydride transfer from NADPH, to form the product GSA.</text>
</comment>
<comment type="similarity">
    <text evidence="1">Belongs to the glutamyl-tRNA reductase family.</text>
</comment>
<comment type="sequence caution" evidence="2">
    <conflict type="erroneous initiation">
        <sequence resource="EMBL-CDS" id="ABM08676"/>
    </conflict>
</comment>
<evidence type="ECO:0000255" key="1">
    <source>
        <dbReference type="HAMAP-Rule" id="MF_00087"/>
    </source>
</evidence>
<evidence type="ECO:0000305" key="2"/>
<dbReference type="EC" id="1.2.1.70" evidence="1"/>
<dbReference type="EMBL" id="CP000474">
    <property type="protein sequence ID" value="ABM08676.1"/>
    <property type="status" value="ALT_INIT"/>
    <property type="molecule type" value="Genomic_DNA"/>
</dbReference>
<dbReference type="RefSeq" id="WP_014922283.1">
    <property type="nucleotide sequence ID" value="NC_008711.1"/>
</dbReference>
<dbReference type="SMR" id="A1R8A6"/>
<dbReference type="STRING" id="290340.AAur_2756"/>
<dbReference type="KEGG" id="aau:AAur_2756"/>
<dbReference type="eggNOG" id="COG0373">
    <property type="taxonomic scope" value="Bacteria"/>
</dbReference>
<dbReference type="HOGENOM" id="CLU_035113_4_1_11"/>
<dbReference type="OrthoDB" id="110209at2"/>
<dbReference type="UniPathway" id="UPA00251">
    <property type="reaction ID" value="UER00316"/>
</dbReference>
<dbReference type="Proteomes" id="UP000000637">
    <property type="component" value="Chromosome"/>
</dbReference>
<dbReference type="GO" id="GO:0008883">
    <property type="term" value="F:glutamyl-tRNA reductase activity"/>
    <property type="evidence" value="ECO:0007669"/>
    <property type="project" value="UniProtKB-UniRule"/>
</dbReference>
<dbReference type="GO" id="GO:0050661">
    <property type="term" value="F:NADP binding"/>
    <property type="evidence" value="ECO:0007669"/>
    <property type="project" value="InterPro"/>
</dbReference>
<dbReference type="GO" id="GO:0019353">
    <property type="term" value="P:protoporphyrinogen IX biosynthetic process from glutamate"/>
    <property type="evidence" value="ECO:0007669"/>
    <property type="project" value="TreeGrafter"/>
</dbReference>
<dbReference type="Gene3D" id="3.30.460.30">
    <property type="entry name" value="Glutamyl-tRNA reductase, N-terminal domain"/>
    <property type="match status" value="1"/>
</dbReference>
<dbReference type="Gene3D" id="3.40.50.720">
    <property type="entry name" value="NAD(P)-binding Rossmann-like Domain"/>
    <property type="match status" value="1"/>
</dbReference>
<dbReference type="HAMAP" id="MF_00087">
    <property type="entry name" value="Glu_tRNA_reductase"/>
    <property type="match status" value="1"/>
</dbReference>
<dbReference type="InterPro" id="IPR000343">
    <property type="entry name" value="4pyrrol_synth_GluRdtase"/>
</dbReference>
<dbReference type="InterPro" id="IPR015896">
    <property type="entry name" value="4pyrrol_synth_GluRdtase_dimer"/>
</dbReference>
<dbReference type="InterPro" id="IPR015895">
    <property type="entry name" value="4pyrrol_synth_GluRdtase_N"/>
</dbReference>
<dbReference type="InterPro" id="IPR018214">
    <property type="entry name" value="GluRdtase_CS"/>
</dbReference>
<dbReference type="InterPro" id="IPR036453">
    <property type="entry name" value="GluRdtase_dimer_dom_sf"/>
</dbReference>
<dbReference type="InterPro" id="IPR036343">
    <property type="entry name" value="GluRdtase_N_sf"/>
</dbReference>
<dbReference type="InterPro" id="IPR036291">
    <property type="entry name" value="NAD(P)-bd_dom_sf"/>
</dbReference>
<dbReference type="InterPro" id="IPR006151">
    <property type="entry name" value="Shikm_DH/Glu-tRNA_Rdtase"/>
</dbReference>
<dbReference type="NCBIfam" id="TIGR01035">
    <property type="entry name" value="hemA"/>
    <property type="match status" value="1"/>
</dbReference>
<dbReference type="NCBIfam" id="NF000750">
    <property type="entry name" value="PRK00045.3-4"/>
    <property type="match status" value="1"/>
</dbReference>
<dbReference type="PANTHER" id="PTHR43013">
    <property type="entry name" value="GLUTAMYL-TRNA REDUCTASE"/>
    <property type="match status" value="1"/>
</dbReference>
<dbReference type="PANTHER" id="PTHR43013:SF1">
    <property type="entry name" value="GLUTAMYL-TRNA REDUCTASE"/>
    <property type="match status" value="1"/>
</dbReference>
<dbReference type="Pfam" id="PF00745">
    <property type="entry name" value="GlutR_dimer"/>
    <property type="match status" value="1"/>
</dbReference>
<dbReference type="Pfam" id="PF05201">
    <property type="entry name" value="GlutR_N"/>
    <property type="match status" value="1"/>
</dbReference>
<dbReference type="Pfam" id="PF01488">
    <property type="entry name" value="Shikimate_DH"/>
    <property type="match status" value="1"/>
</dbReference>
<dbReference type="PIRSF" id="PIRSF000445">
    <property type="entry name" value="4pyrrol_synth_GluRdtase"/>
    <property type="match status" value="1"/>
</dbReference>
<dbReference type="SUPFAM" id="SSF69742">
    <property type="entry name" value="Glutamyl tRNA-reductase catalytic, N-terminal domain"/>
    <property type="match status" value="1"/>
</dbReference>
<dbReference type="SUPFAM" id="SSF69075">
    <property type="entry name" value="Glutamyl tRNA-reductase dimerization domain"/>
    <property type="match status" value="1"/>
</dbReference>
<dbReference type="SUPFAM" id="SSF51735">
    <property type="entry name" value="NAD(P)-binding Rossmann-fold domains"/>
    <property type="match status" value="1"/>
</dbReference>
<dbReference type="PROSITE" id="PS00747">
    <property type="entry name" value="GLUTR"/>
    <property type="match status" value="1"/>
</dbReference>
<gene>
    <name evidence="1" type="primary">hemA</name>
    <name type="ordered locus">AAur_2756</name>
</gene>
<name>HEM1_PAEAT</name>
<protein>
    <recommendedName>
        <fullName evidence="1">Glutamyl-tRNA reductase</fullName>
        <shortName evidence="1">GluTR</shortName>
        <ecNumber evidence="1">1.2.1.70</ecNumber>
    </recommendedName>
</protein>
<sequence length="440" mass="45893">MVLFSLVATHADIDLETVAQLSNGSSELASAALTDSSVVSGAVVLATCNRYEVYGETANGADLEAARSALVSQISELSGLNEQLVSRSFATHTGPDVTRHLFAVSAGLDSAVVGEREIAGQVRRALITAQQEGTASSGLVRLFQAASKTAKDVGAQTALGSRGLSIVSVALDLATDLAENDDWTTKKVVVFGTGAYAGATMSLLRERGCTDISVYSSSGRAEGFVATRGGTALDADTLPAAVAAADVMIGCSGSDNRVEAADLARVRANSGKPLIAIDLALTHDFDPAVGELDGVELLTLESVRLAAPQEQAESLSQASAIVNGAATSFESEREARSVDTAIVALRRHTMNVLDAEMEKVRARHGCTAAAEEVEFALRRMVKQLLHIPTVRARELAANGQQDDYVAALEALYGIQVEQPQAAAPASECPVDHEQLRSESA</sequence>
<organism>
    <name type="scientific">Paenarthrobacter aurescens (strain TC1)</name>
    <dbReference type="NCBI Taxonomy" id="290340"/>
    <lineage>
        <taxon>Bacteria</taxon>
        <taxon>Bacillati</taxon>
        <taxon>Actinomycetota</taxon>
        <taxon>Actinomycetes</taxon>
        <taxon>Micrococcales</taxon>
        <taxon>Micrococcaceae</taxon>
        <taxon>Paenarthrobacter</taxon>
    </lineage>
</organism>
<keyword id="KW-0521">NADP</keyword>
<keyword id="KW-0560">Oxidoreductase</keyword>
<keyword id="KW-0627">Porphyrin biosynthesis</keyword>